<accession>A6MFL5</accession>
<sequence>MSMLCYTLIIAFLIGIWAAPKSEDNVPLGSPATSDLSDTSCAQTHKALKTSRNTDQRHPAPKKAEDQELGSAANIIVDPKLFQKRRFQSPRVLFSTQPPPLSRDEQSVEFLENEDALNRNIRSKRENHPVNDHGEYSVCDSVSVWVNKTTATDIKGKPVTVMVDVNLNNHVYKQYFFETKCKNPNPVPSGCRGIDSRHWNSYCTTTQSFVKALTKEGNQASWRFIRIDTACVCVISRKTGNF</sequence>
<keyword id="KW-0165">Cleavage on pair of basic residues</keyword>
<keyword id="KW-1015">Disulfide bond</keyword>
<keyword id="KW-0325">Glycoprotein</keyword>
<keyword id="KW-0339">Growth factor</keyword>
<keyword id="KW-0446">Lipid-binding</keyword>
<keyword id="KW-0481">Metalloenzyme inhibitor</keyword>
<keyword id="KW-0483">Metalloprotease inhibitor</keyword>
<keyword id="KW-0646">Protease inhibitor</keyword>
<keyword id="KW-0964">Secreted</keyword>
<keyword id="KW-0732">Signal</keyword>
<keyword id="KW-0800">Toxin</keyword>
<evidence type="ECO:0000250" key="1"/>
<evidence type="ECO:0000250" key="2">
    <source>
        <dbReference type="UniProtKB" id="P61898"/>
    </source>
</evidence>
<evidence type="ECO:0000250" key="3">
    <source>
        <dbReference type="UniProtKB" id="P61899"/>
    </source>
</evidence>
<evidence type="ECO:0000255" key="4"/>
<evidence type="ECO:0000256" key="5">
    <source>
        <dbReference type="SAM" id="MobiDB-lite"/>
    </source>
</evidence>
<evidence type="ECO:0000305" key="6"/>
<reference key="1">
    <citation type="journal article" date="2006" name="Proteomics">
        <title>Post-translational modification accounts for the presence of varied forms of nerve growth factor in Australian elapid snake venoms.</title>
        <authorList>
            <person name="Earl S.T.H."/>
            <person name="Birrell G.W."/>
            <person name="Wallis T.P."/>
            <person name="St Pierre L."/>
            <person name="Masci P.P."/>
            <person name="de Jersey J."/>
            <person name="Gorman J.J."/>
            <person name="Lavin M.F."/>
        </authorList>
    </citation>
    <scope>NUCLEOTIDE SEQUENCE [MRNA]</scope>
    <source>
        <tissue>Venom gland</tissue>
    </source>
</reference>
<reference key="2">
    <citation type="journal article" date="2007" name="J. Proteome Res.">
        <title>Diversity of toxic components from the venom of the evolutionarily distinct black whip snake, Demansia vestigiata.</title>
        <authorList>
            <person name="St Pierre L."/>
            <person name="Birrell G.W."/>
            <person name="Earl S.T.H."/>
            <person name="Wallis T.P."/>
            <person name="Gorman J.J."/>
            <person name="de Jersey J."/>
            <person name="Masci P.P."/>
            <person name="Lavin M.F."/>
        </authorList>
    </citation>
    <scope>NUCLEOTIDE SEQUENCE [MRNA]</scope>
    <source>
        <tissue>Venom gland</tissue>
    </source>
</reference>
<protein>
    <recommendedName>
        <fullName>Venom nerve growth factor 1</fullName>
        <shortName>v-NGF-1</shortName>
        <shortName>vNGF-1</shortName>
    </recommendedName>
</protein>
<comment type="function">
    <text evidence="2 3">Nerve growth factor is important for the development and maintenance of the sympathetic and sensory nervous systems. It stimulates division and differentiation of sympathetic and embryonic sensory neurons as well as basal forebrain cholinergic neurons in the brain. Its relevance in the snake venom is not clear. However, it has been shown to inhibit metalloproteinase-dependent proteolysis of platelet glycoprotein Ib alpha, suggesting a metalloproteinase inhibition to prevent metalloprotease autodigestion and/or protection against prey proteases (By similarity). Binds a lipid between the two protein chains in the homodimer. The lipid-bound form promotes histamine relase from mouse mast cells, contrary to the lipid-free form (By similarity).</text>
</comment>
<comment type="subunit">
    <text evidence="2">Homodimer; non-covalently linked.</text>
</comment>
<comment type="subcellular location">
    <subcellularLocation>
        <location evidence="2">Secreted</location>
    </subcellularLocation>
</comment>
<comment type="tissue specificity">
    <text>Expressed by the venom gland.</text>
</comment>
<comment type="similarity">
    <text evidence="6">Belongs to the NGF-beta family.</text>
</comment>
<proteinExistence type="evidence at transcript level"/>
<dbReference type="EMBL" id="DQ917526">
    <property type="protein sequence ID" value="ABK63555.1"/>
    <property type="molecule type" value="mRNA"/>
</dbReference>
<dbReference type="SMR" id="A6MFL5"/>
<dbReference type="GO" id="GO:0030424">
    <property type="term" value="C:axon"/>
    <property type="evidence" value="ECO:0007669"/>
    <property type="project" value="TreeGrafter"/>
</dbReference>
<dbReference type="GO" id="GO:0030425">
    <property type="term" value="C:dendrite"/>
    <property type="evidence" value="ECO:0007669"/>
    <property type="project" value="TreeGrafter"/>
</dbReference>
<dbReference type="GO" id="GO:0005615">
    <property type="term" value="C:extracellular space"/>
    <property type="evidence" value="ECO:0007669"/>
    <property type="project" value="TreeGrafter"/>
</dbReference>
<dbReference type="GO" id="GO:0008021">
    <property type="term" value="C:synaptic vesicle"/>
    <property type="evidence" value="ECO:0007669"/>
    <property type="project" value="TreeGrafter"/>
</dbReference>
<dbReference type="GO" id="GO:0008083">
    <property type="term" value="F:growth factor activity"/>
    <property type="evidence" value="ECO:0007669"/>
    <property type="project" value="UniProtKB-KW"/>
</dbReference>
<dbReference type="GO" id="GO:0008289">
    <property type="term" value="F:lipid binding"/>
    <property type="evidence" value="ECO:0007669"/>
    <property type="project" value="UniProtKB-KW"/>
</dbReference>
<dbReference type="GO" id="GO:0008191">
    <property type="term" value="F:metalloendopeptidase inhibitor activity"/>
    <property type="evidence" value="ECO:0000250"/>
    <property type="project" value="UniProtKB"/>
</dbReference>
<dbReference type="GO" id="GO:0005163">
    <property type="term" value="F:nerve growth factor receptor binding"/>
    <property type="evidence" value="ECO:0007669"/>
    <property type="project" value="TreeGrafter"/>
</dbReference>
<dbReference type="GO" id="GO:0090729">
    <property type="term" value="F:toxin activity"/>
    <property type="evidence" value="ECO:0007669"/>
    <property type="project" value="UniProtKB-KW"/>
</dbReference>
<dbReference type="GO" id="GO:0007169">
    <property type="term" value="P:cell surface receptor protein tyrosine kinase signaling pathway"/>
    <property type="evidence" value="ECO:0007669"/>
    <property type="project" value="TreeGrafter"/>
</dbReference>
<dbReference type="GO" id="GO:0050804">
    <property type="term" value="P:modulation of chemical synaptic transmission"/>
    <property type="evidence" value="ECO:0007669"/>
    <property type="project" value="TreeGrafter"/>
</dbReference>
<dbReference type="GO" id="GO:0043524">
    <property type="term" value="P:negative regulation of neuron apoptotic process"/>
    <property type="evidence" value="ECO:0007669"/>
    <property type="project" value="TreeGrafter"/>
</dbReference>
<dbReference type="GO" id="GO:0021675">
    <property type="term" value="P:nerve development"/>
    <property type="evidence" value="ECO:0007669"/>
    <property type="project" value="TreeGrafter"/>
</dbReference>
<dbReference type="GO" id="GO:0038180">
    <property type="term" value="P:nerve growth factor signaling pathway"/>
    <property type="evidence" value="ECO:0007669"/>
    <property type="project" value="TreeGrafter"/>
</dbReference>
<dbReference type="GO" id="GO:0048812">
    <property type="term" value="P:neuron projection morphogenesis"/>
    <property type="evidence" value="ECO:0007669"/>
    <property type="project" value="TreeGrafter"/>
</dbReference>
<dbReference type="FunFam" id="2.10.90.10:FF:000002">
    <property type="entry name" value="Brain-derived neurotrophic factor"/>
    <property type="match status" value="1"/>
</dbReference>
<dbReference type="Gene3D" id="2.10.90.10">
    <property type="entry name" value="Cystine-knot cytokines"/>
    <property type="match status" value="1"/>
</dbReference>
<dbReference type="InterPro" id="IPR029034">
    <property type="entry name" value="Cystine-knot_cytokine"/>
</dbReference>
<dbReference type="InterPro" id="IPR020408">
    <property type="entry name" value="Nerve_growth_factor-like"/>
</dbReference>
<dbReference type="InterPro" id="IPR002072">
    <property type="entry name" value="Nerve_growth_factor-rel"/>
</dbReference>
<dbReference type="InterPro" id="IPR020425">
    <property type="entry name" value="Nerve_growth_factor_bsu"/>
</dbReference>
<dbReference type="InterPro" id="IPR019846">
    <property type="entry name" value="Nerve_growth_factor_CS"/>
</dbReference>
<dbReference type="InterPro" id="IPR020433">
    <property type="entry name" value="Venom_nerve_growth_factor"/>
</dbReference>
<dbReference type="PANTHER" id="PTHR11589:SF10">
    <property type="entry name" value="BETA-NERVE GROWTH FACTOR"/>
    <property type="match status" value="1"/>
</dbReference>
<dbReference type="PANTHER" id="PTHR11589">
    <property type="entry name" value="NERVE GROWTH FACTOR NGF -RELATED"/>
    <property type="match status" value="1"/>
</dbReference>
<dbReference type="Pfam" id="PF00243">
    <property type="entry name" value="NGF"/>
    <property type="match status" value="1"/>
</dbReference>
<dbReference type="PIRSF" id="PIRSF001789">
    <property type="entry name" value="NGF"/>
    <property type="match status" value="1"/>
</dbReference>
<dbReference type="PRINTS" id="PR00268">
    <property type="entry name" value="NGF"/>
</dbReference>
<dbReference type="PRINTS" id="PR01913">
    <property type="entry name" value="NGFBETA"/>
</dbReference>
<dbReference type="PRINTS" id="PR01917">
    <property type="entry name" value="VENOMNGF"/>
</dbReference>
<dbReference type="SMART" id="SM00140">
    <property type="entry name" value="NGF"/>
    <property type="match status" value="1"/>
</dbReference>
<dbReference type="SUPFAM" id="SSF57501">
    <property type="entry name" value="Cystine-knot cytokines"/>
    <property type="match status" value="1"/>
</dbReference>
<dbReference type="PROSITE" id="PS00248">
    <property type="entry name" value="NGF_1"/>
    <property type="match status" value="1"/>
</dbReference>
<dbReference type="PROSITE" id="PS50270">
    <property type="entry name" value="NGF_2"/>
    <property type="match status" value="1"/>
</dbReference>
<name>NGFV1_DEMVE</name>
<organism>
    <name type="scientific">Demansia vestigiata</name>
    <name type="common">Lesser black whip snake</name>
    <name type="synonym">Demansia atra</name>
    <dbReference type="NCBI Taxonomy" id="412038"/>
    <lineage>
        <taxon>Eukaryota</taxon>
        <taxon>Metazoa</taxon>
        <taxon>Chordata</taxon>
        <taxon>Craniata</taxon>
        <taxon>Vertebrata</taxon>
        <taxon>Euteleostomi</taxon>
        <taxon>Lepidosauria</taxon>
        <taxon>Squamata</taxon>
        <taxon>Bifurcata</taxon>
        <taxon>Unidentata</taxon>
        <taxon>Episquamata</taxon>
        <taxon>Toxicofera</taxon>
        <taxon>Serpentes</taxon>
        <taxon>Colubroidea</taxon>
        <taxon>Elapidae</taxon>
        <taxon>Notechinae</taxon>
        <taxon>Demansia</taxon>
    </lineage>
</organism>
<feature type="signal peptide" evidence="4">
    <location>
        <begin position="1"/>
        <end position="18"/>
    </location>
</feature>
<feature type="propeptide" id="PRO_5000254119" evidence="1">
    <location>
        <begin position="19"/>
        <end position="125"/>
    </location>
</feature>
<feature type="chain" id="PRO_5000254120" description="Venom nerve growth factor 1">
    <location>
        <begin position="126"/>
        <end position="242"/>
    </location>
</feature>
<feature type="region of interest" description="Disordered" evidence="5">
    <location>
        <begin position="26"/>
        <end position="69"/>
    </location>
</feature>
<feature type="compositionally biased region" description="Polar residues" evidence="5">
    <location>
        <begin position="31"/>
        <end position="43"/>
    </location>
</feature>
<feature type="compositionally biased region" description="Basic and acidic residues" evidence="5">
    <location>
        <begin position="52"/>
        <end position="66"/>
    </location>
</feature>
<feature type="glycosylation site" description="N-linked (GlcNAc...) asparagine" evidence="4">
    <location>
        <position position="147"/>
    </location>
</feature>
<feature type="disulfide bond" evidence="2">
    <location>
        <begin position="139"/>
        <end position="203"/>
    </location>
</feature>
<feature type="disulfide bond" evidence="2">
    <location>
        <begin position="181"/>
        <end position="231"/>
    </location>
</feature>
<feature type="disulfide bond" evidence="2">
    <location>
        <begin position="191"/>
        <end position="233"/>
    </location>
</feature>